<protein>
    <recommendedName>
        <fullName evidence="1">Fumarate reductase subunit C</fullName>
    </recommendedName>
    <alternativeName>
        <fullName evidence="1">Fumarate reductase 15 kDa hydrophobic protein</fullName>
    </alternativeName>
    <alternativeName>
        <fullName evidence="1">Quinol-fumarate reductase subunit C</fullName>
        <shortName evidence="1">QFR subunit C</shortName>
    </alternativeName>
</protein>
<gene>
    <name evidence="1" type="primary">frdC</name>
    <name type="ordered locus">Z5759</name>
    <name type="ordered locus">ECs5133</name>
</gene>
<reference key="1">
    <citation type="journal article" date="2001" name="Nature">
        <title>Genome sequence of enterohaemorrhagic Escherichia coli O157:H7.</title>
        <authorList>
            <person name="Perna N.T."/>
            <person name="Plunkett G. III"/>
            <person name="Burland V."/>
            <person name="Mau B."/>
            <person name="Glasner J.D."/>
            <person name="Rose D.J."/>
            <person name="Mayhew G.F."/>
            <person name="Evans P.S."/>
            <person name="Gregor J."/>
            <person name="Kirkpatrick H.A."/>
            <person name="Posfai G."/>
            <person name="Hackett J."/>
            <person name="Klink S."/>
            <person name="Boutin A."/>
            <person name="Shao Y."/>
            <person name="Miller L."/>
            <person name="Grotbeck E.J."/>
            <person name="Davis N.W."/>
            <person name="Lim A."/>
            <person name="Dimalanta E.T."/>
            <person name="Potamousis K."/>
            <person name="Apodaca J."/>
            <person name="Anantharaman T.S."/>
            <person name="Lin J."/>
            <person name="Yen G."/>
            <person name="Schwartz D.C."/>
            <person name="Welch R.A."/>
            <person name="Blattner F.R."/>
        </authorList>
    </citation>
    <scope>NUCLEOTIDE SEQUENCE [LARGE SCALE GENOMIC DNA]</scope>
    <source>
        <strain>O157:H7 / EDL933 / ATCC 700927 / EHEC</strain>
    </source>
</reference>
<reference key="2">
    <citation type="journal article" date="2001" name="DNA Res.">
        <title>Complete genome sequence of enterohemorrhagic Escherichia coli O157:H7 and genomic comparison with a laboratory strain K-12.</title>
        <authorList>
            <person name="Hayashi T."/>
            <person name="Makino K."/>
            <person name="Ohnishi M."/>
            <person name="Kurokawa K."/>
            <person name="Ishii K."/>
            <person name="Yokoyama K."/>
            <person name="Han C.-G."/>
            <person name="Ohtsubo E."/>
            <person name="Nakayama K."/>
            <person name="Murata T."/>
            <person name="Tanaka M."/>
            <person name="Tobe T."/>
            <person name="Iida T."/>
            <person name="Takami H."/>
            <person name="Honda T."/>
            <person name="Sasakawa C."/>
            <person name="Ogasawara N."/>
            <person name="Yasunaga T."/>
            <person name="Kuhara S."/>
            <person name="Shiba T."/>
            <person name="Hattori M."/>
            <person name="Shinagawa H."/>
        </authorList>
    </citation>
    <scope>NUCLEOTIDE SEQUENCE [LARGE SCALE GENOMIC DNA]</scope>
    <source>
        <strain>O157:H7 / Sakai / RIMD 0509952 / EHEC</strain>
    </source>
</reference>
<feature type="chain" id="PRO_0000196528" description="Fumarate reductase subunit C">
    <location>
        <begin position="1"/>
        <end position="131"/>
    </location>
</feature>
<feature type="transmembrane region" description="Helical" evidence="1">
    <location>
        <begin position="30"/>
        <end position="50"/>
    </location>
</feature>
<feature type="transmembrane region" description="Helical" evidence="1">
    <location>
        <begin position="63"/>
        <end position="83"/>
    </location>
</feature>
<feature type="transmembrane region" description="Helical" evidence="1">
    <location>
        <begin position="109"/>
        <end position="129"/>
    </location>
</feature>
<accession>P0A8Q2</accession>
<accession>P03805</accession>
<proteinExistence type="inferred from homology"/>
<comment type="function">
    <text evidence="1">Two distinct, membrane-bound, FAD-containing enzymes are responsible for the catalysis of fumarate and succinate interconversion; fumarate reductase is used in anaerobic growth, and succinate dehydrogenase is used in aerobic growth. Anchors the catalytic components of the fumarate reductase complex to the cell inner membrane, binds quinones.</text>
</comment>
<comment type="subunit">
    <text evidence="1">Part of an enzyme complex containing four subunits: a flavoprotein (FrdA), an iron-sulfur protein (FrdB), and two hydrophobic anchor proteins (FrdC and FrdD).</text>
</comment>
<comment type="subcellular location">
    <subcellularLocation>
        <location evidence="1">Cell inner membrane</location>
        <topology evidence="1">Multi-pass membrane protein</topology>
    </subcellularLocation>
</comment>
<comment type="similarity">
    <text evidence="1">Belongs to the FrdC family.</text>
</comment>
<evidence type="ECO:0000255" key="1">
    <source>
        <dbReference type="HAMAP-Rule" id="MF_00708"/>
    </source>
</evidence>
<dbReference type="EMBL" id="AE005174">
    <property type="protein sequence ID" value="AAG59353.1"/>
    <property type="molecule type" value="Genomic_DNA"/>
</dbReference>
<dbReference type="EMBL" id="BA000007">
    <property type="protein sequence ID" value="BAB38556.1"/>
    <property type="molecule type" value="Genomic_DNA"/>
</dbReference>
<dbReference type="PIR" id="E86111">
    <property type="entry name" value="E86111"/>
</dbReference>
<dbReference type="PIR" id="E91270">
    <property type="entry name" value="E91270"/>
</dbReference>
<dbReference type="RefSeq" id="NP_313160.1">
    <property type="nucleotide sequence ID" value="NC_002695.1"/>
</dbReference>
<dbReference type="RefSeq" id="WP_000208757.1">
    <property type="nucleotide sequence ID" value="NZ_VOAI01000008.1"/>
</dbReference>
<dbReference type="SMR" id="P0A8Q2"/>
<dbReference type="STRING" id="155864.Z5759"/>
<dbReference type="GeneID" id="914102"/>
<dbReference type="GeneID" id="93777670"/>
<dbReference type="KEGG" id="ece:Z5759"/>
<dbReference type="KEGG" id="ecs:ECs_5133"/>
<dbReference type="PATRIC" id="fig|386585.9.peg.5366"/>
<dbReference type="eggNOG" id="COG3029">
    <property type="taxonomic scope" value="Bacteria"/>
</dbReference>
<dbReference type="HOGENOM" id="CLU_156492_0_0_6"/>
<dbReference type="OMA" id="MTATWWQ"/>
<dbReference type="Proteomes" id="UP000000558">
    <property type="component" value="Chromosome"/>
</dbReference>
<dbReference type="Proteomes" id="UP000002519">
    <property type="component" value="Chromosome"/>
</dbReference>
<dbReference type="GO" id="GO:0045283">
    <property type="term" value="C:fumarate reductase complex"/>
    <property type="evidence" value="ECO:0007669"/>
    <property type="project" value="UniProtKB-UniRule"/>
</dbReference>
<dbReference type="GO" id="GO:0005886">
    <property type="term" value="C:plasma membrane"/>
    <property type="evidence" value="ECO:0007669"/>
    <property type="project" value="UniProtKB-SubCell"/>
</dbReference>
<dbReference type="GO" id="GO:0000104">
    <property type="term" value="F:succinate dehydrogenase activity"/>
    <property type="evidence" value="ECO:0007669"/>
    <property type="project" value="UniProtKB-UniRule"/>
</dbReference>
<dbReference type="CDD" id="cd00546">
    <property type="entry name" value="QFR_TypeD_subunitC"/>
    <property type="match status" value="1"/>
</dbReference>
<dbReference type="FunFam" id="1.20.1300.10:FF:000003">
    <property type="entry name" value="Fumarate reductase subunit C"/>
    <property type="match status" value="1"/>
</dbReference>
<dbReference type="Gene3D" id="1.20.1300.10">
    <property type="entry name" value="Fumarate reductase/succinate dehydrogenase, transmembrane subunit"/>
    <property type="match status" value="1"/>
</dbReference>
<dbReference type="HAMAP" id="MF_00708">
    <property type="entry name" value="Fumarate_red_C"/>
    <property type="match status" value="1"/>
</dbReference>
<dbReference type="InterPro" id="IPR003510">
    <property type="entry name" value="Fumarate_red_C"/>
</dbReference>
<dbReference type="InterPro" id="IPR034804">
    <property type="entry name" value="SQR/QFR_C/D"/>
</dbReference>
<dbReference type="NCBIfam" id="NF003445">
    <property type="entry name" value="PRK04987.1"/>
    <property type="match status" value="1"/>
</dbReference>
<dbReference type="Pfam" id="PF02300">
    <property type="entry name" value="Fumarate_red_C"/>
    <property type="match status" value="1"/>
</dbReference>
<dbReference type="PIRSF" id="PIRSF000180">
    <property type="entry name" value="FrdC"/>
    <property type="match status" value="1"/>
</dbReference>
<dbReference type="SUPFAM" id="SSF81343">
    <property type="entry name" value="Fumarate reductase respiratory complex transmembrane subunits"/>
    <property type="match status" value="1"/>
</dbReference>
<name>FRDC_ECO57</name>
<keyword id="KW-0997">Cell inner membrane</keyword>
<keyword id="KW-1003">Cell membrane</keyword>
<keyword id="KW-0472">Membrane</keyword>
<keyword id="KW-1185">Reference proteome</keyword>
<keyword id="KW-0812">Transmembrane</keyword>
<keyword id="KW-1133">Transmembrane helix</keyword>
<sequence>MTTKRKPYVRPMTSTWWKKLPFYRFYMLREGTAVPAVWFSIELIFGLFALKNGPEAWAGFVDFLQNPVIVIINLITLAAALLHTKTWFELAPKAANIIVKDEKMGPEPIIKSLWAVTVVATIVILFVALYW</sequence>
<organism>
    <name type="scientific">Escherichia coli O157:H7</name>
    <dbReference type="NCBI Taxonomy" id="83334"/>
    <lineage>
        <taxon>Bacteria</taxon>
        <taxon>Pseudomonadati</taxon>
        <taxon>Pseudomonadota</taxon>
        <taxon>Gammaproteobacteria</taxon>
        <taxon>Enterobacterales</taxon>
        <taxon>Enterobacteriaceae</taxon>
        <taxon>Escherichia</taxon>
    </lineage>
</organism>